<comment type="function">
    <text evidence="1">Catalyzes an early step in the biosynthesis of tetrapyrroles. Binds two molecules of 5-aminolevulinate per subunit, each at a distinct site, and catalyzes their condensation to form porphobilinogen (By similarity).</text>
</comment>
<comment type="catalytic activity">
    <reaction>
        <text>2 5-aminolevulinate = porphobilinogen + 2 H2O + H(+)</text>
        <dbReference type="Rhea" id="RHEA:24064"/>
        <dbReference type="ChEBI" id="CHEBI:15377"/>
        <dbReference type="ChEBI" id="CHEBI:15378"/>
        <dbReference type="ChEBI" id="CHEBI:58126"/>
        <dbReference type="ChEBI" id="CHEBI:356416"/>
        <dbReference type="EC" id="4.2.1.24"/>
    </reaction>
</comment>
<comment type="cofactor">
    <cofactor evidence="1">
        <name>Mg(2+)</name>
        <dbReference type="ChEBI" id="CHEBI:18420"/>
    </cofactor>
    <text evidence="1">Binds 2 magnesium ions per monomer. The first magnesium ion is required for catalysis. The second functions as allosteric activator.</text>
</comment>
<comment type="pathway">
    <text>Porphyrin-containing compound metabolism; protoporphyrin-IX biosynthesis; coproporphyrinogen-III from 5-aminolevulinate: step 1/4.</text>
</comment>
<comment type="subunit">
    <text evidence="1">Homooctamer.</text>
</comment>
<comment type="subcellular location">
    <subcellularLocation>
        <location>Plastid</location>
        <location>Chloroplast</location>
    </subcellularLocation>
</comment>
<comment type="similarity">
    <text evidence="4">Belongs to the ALAD family.</text>
</comment>
<sequence length="417" mass="45182">MAALLVPGGGAAPGLVWRRRRAAVQCAAASPSSPDPSWRTNVVSDRVSVEPSPRTIHECEADVVSGNPPAAPAAPAKAKAPPGTPVVKPLRLTSRPRRNRKSAALRDAFQETTLTPANFILPLFIHEGEEDSPIGAMPGCSRLGWRHGLIDEVYKARDVGVNSVVLFPKIPDALKSSTGDEAYNPDGLVPRAIRTLKDKFPDLVIYTDVALDPYSSDGHDGIVREDGVIMNDETVHQLCKQAVAQAEAGADVVSPSDMMDGRVGAIRTALDEAGYYHVSIMAYTAKYASAFYEPFREELDSNPRFGDKKTYQMNPENYREALLEVHADESEGADILMVKPAMPYLHVIRLLRDTSALPISAYQVSGEYSMIKAAASQGMLDEKKAILESLLCIKRAGADVILTYAALQAARWLCGEK</sequence>
<reference key="1">
    <citation type="submission" date="1993-09" db="EMBL/GenBank/DDBJ databases">
        <authorList>
            <person name="Sollbach M."/>
            <person name="Schneider-Poetsch H.A.W."/>
        </authorList>
    </citation>
    <scope>NUCLEOTIDE SEQUENCE [GENOMIC DNA]</scope>
</reference>
<proteinExistence type="inferred from homology"/>
<name>HEM2_SELMA</name>
<evidence type="ECO:0000250" key="1"/>
<evidence type="ECO:0000255" key="2"/>
<evidence type="ECO:0000256" key="3">
    <source>
        <dbReference type="SAM" id="MobiDB-lite"/>
    </source>
</evidence>
<evidence type="ECO:0000305" key="4"/>
<organism>
    <name type="scientific">Selaginella martensii</name>
    <name type="common">Martens's spike moss</name>
    <dbReference type="NCBI Taxonomy" id="3247"/>
    <lineage>
        <taxon>Eukaryota</taxon>
        <taxon>Viridiplantae</taxon>
        <taxon>Streptophyta</taxon>
        <taxon>Embryophyta</taxon>
        <taxon>Tracheophyta</taxon>
        <taxon>Lycopodiopsida</taxon>
        <taxon>Selaginellales</taxon>
        <taxon>Selaginellaceae</taxon>
        <taxon>Selaginella</taxon>
    </lineage>
</organism>
<gene>
    <name type="primary">HEMB</name>
    <name type="synonym">ALA2</name>
</gene>
<feature type="transit peptide" description="Chloroplast" evidence="2">
    <location>
        <begin position="1"/>
        <end position="40"/>
    </location>
</feature>
<feature type="chain" id="PRO_0000013319" description="Delta-aminolevulinic acid dehydratase, chloroplastic">
    <location>
        <begin position="41"/>
        <end position="417"/>
    </location>
</feature>
<feature type="region of interest" description="Disordered" evidence="3">
    <location>
        <begin position="63"/>
        <end position="92"/>
    </location>
</feature>
<feature type="active site" description="Schiff-base intermediate with substrate" evidence="1">
    <location>
        <position position="286"/>
    </location>
</feature>
<feature type="active site" description="Schiff-base intermediate with substrate" evidence="1">
    <location>
        <position position="339"/>
    </location>
</feature>
<feature type="binding site" evidence="1">
    <location>
        <position position="296"/>
    </location>
    <ligand>
        <name>5-aminolevulinate</name>
        <dbReference type="ChEBI" id="CHEBI:356416"/>
        <label>1</label>
    </ligand>
</feature>
<feature type="binding site" evidence="1">
    <location>
        <position position="308"/>
    </location>
    <ligand>
        <name>5-aminolevulinate</name>
        <dbReference type="ChEBI" id="CHEBI:356416"/>
        <label>1</label>
    </ligand>
</feature>
<feature type="binding site" evidence="1">
    <location>
        <position position="324"/>
    </location>
    <ligand>
        <name>Mg(2+)</name>
        <dbReference type="ChEBI" id="CHEBI:18420"/>
    </ligand>
</feature>
<feature type="binding site" evidence="1">
    <location>
        <position position="365"/>
    </location>
    <ligand>
        <name>5-aminolevulinate</name>
        <dbReference type="ChEBI" id="CHEBI:356416"/>
        <label>2</label>
    </ligand>
</feature>
<feature type="binding site" evidence="1">
    <location>
        <position position="404"/>
    </location>
    <ligand>
        <name>5-aminolevulinate</name>
        <dbReference type="ChEBI" id="CHEBI:356416"/>
        <label>2</label>
    </ligand>
</feature>
<protein>
    <recommendedName>
        <fullName>Delta-aminolevulinic acid dehydratase, chloroplastic</fullName>
        <shortName>ALAD</shortName>
        <shortName>ALADH</shortName>
        <ecNumber>4.2.1.24</ecNumber>
    </recommendedName>
    <alternativeName>
        <fullName>Porphobilinogen synthase</fullName>
    </alternativeName>
</protein>
<accession>P45623</accession>
<keyword id="KW-0021">Allosteric enzyme</keyword>
<keyword id="KW-0149">Chlorophyll biosynthesis</keyword>
<keyword id="KW-0150">Chloroplast</keyword>
<keyword id="KW-0350">Heme biosynthesis</keyword>
<keyword id="KW-0456">Lyase</keyword>
<keyword id="KW-0460">Magnesium</keyword>
<keyword id="KW-0479">Metal-binding</keyword>
<keyword id="KW-0934">Plastid</keyword>
<keyword id="KW-0627">Porphyrin biosynthesis</keyword>
<keyword id="KW-0809">Transit peptide</keyword>
<dbReference type="EC" id="4.2.1.24"/>
<dbReference type="EMBL" id="X75043">
    <property type="protein sequence ID" value="CAA52955.1"/>
    <property type="molecule type" value="Genomic_DNA"/>
</dbReference>
<dbReference type="SMR" id="P45623"/>
<dbReference type="UniPathway" id="UPA00251">
    <property type="reaction ID" value="UER00318"/>
</dbReference>
<dbReference type="GO" id="GO:0009507">
    <property type="term" value="C:chloroplast"/>
    <property type="evidence" value="ECO:0007669"/>
    <property type="project" value="UniProtKB-SubCell"/>
</dbReference>
<dbReference type="GO" id="GO:0005829">
    <property type="term" value="C:cytosol"/>
    <property type="evidence" value="ECO:0007669"/>
    <property type="project" value="TreeGrafter"/>
</dbReference>
<dbReference type="GO" id="GO:0004655">
    <property type="term" value="F:porphobilinogen synthase activity"/>
    <property type="evidence" value="ECO:0007669"/>
    <property type="project" value="UniProtKB-EC"/>
</dbReference>
<dbReference type="GO" id="GO:0008270">
    <property type="term" value="F:zinc ion binding"/>
    <property type="evidence" value="ECO:0007669"/>
    <property type="project" value="TreeGrafter"/>
</dbReference>
<dbReference type="GO" id="GO:0015995">
    <property type="term" value="P:chlorophyll biosynthetic process"/>
    <property type="evidence" value="ECO:0007669"/>
    <property type="project" value="UniProtKB-KW"/>
</dbReference>
<dbReference type="GO" id="GO:0006782">
    <property type="term" value="P:protoporphyrinogen IX biosynthetic process"/>
    <property type="evidence" value="ECO:0007669"/>
    <property type="project" value="UniProtKB-UniPathway"/>
</dbReference>
<dbReference type="CDD" id="cd04823">
    <property type="entry name" value="ALAD_PBGS_aspartate_rich"/>
    <property type="match status" value="1"/>
</dbReference>
<dbReference type="FunFam" id="3.20.20.70:FF:000101">
    <property type="entry name" value="Delta-aminolevulinic acid dehydratase"/>
    <property type="match status" value="1"/>
</dbReference>
<dbReference type="Gene3D" id="3.20.20.70">
    <property type="entry name" value="Aldolase class I"/>
    <property type="match status" value="1"/>
</dbReference>
<dbReference type="InterPro" id="IPR001731">
    <property type="entry name" value="ALAD"/>
</dbReference>
<dbReference type="InterPro" id="IPR030656">
    <property type="entry name" value="ALAD_AS"/>
</dbReference>
<dbReference type="InterPro" id="IPR013785">
    <property type="entry name" value="Aldolase_TIM"/>
</dbReference>
<dbReference type="NCBIfam" id="NF006762">
    <property type="entry name" value="PRK09283.1"/>
    <property type="match status" value="1"/>
</dbReference>
<dbReference type="PANTHER" id="PTHR11458">
    <property type="entry name" value="DELTA-AMINOLEVULINIC ACID DEHYDRATASE"/>
    <property type="match status" value="1"/>
</dbReference>
<dbReference type="PANTHER" id="PTHR11458:SF0">
    <property type="entry name" value="DELTA-AMINOLEVULINIC ACID DEHYDRATASE"/>
    <property type="match status" value="1"/>
</dbReference>
<dbReference type="Pfam" id="PF00490">
    <property type="entry name" value="ALAD"/>
    <property type="match status" value="1"/>
</dbReference>
<dbReference type="PRINTS" id="PR00144">
    <property type="entry name" value="DALDHYDRTASE"/>
</dbReference>
<dbReference type="SMART" id="SM01004">
    <property type="entry name" value="ALAD"/>
    <property type="match status" value="1"/>
</dbReference>
<dbReference type="SUPFAM" id="SSF51569">
    <property type="entry name" value="Aldolase"/>
    <property type="match status" value="1"/>
</dbReference>
<dbReference type="PROSITE" id="PS00169">
    <property type="entry name" value="D_ALA_DEHYDRATASE"/>
    <property type="match status" value="1"/>
</dbReference>